<dbReference type="EMBL" id="CP000239">
    <property type="protein sequence ID" value="ABD00890.1"/>
    <property type="molecule type" value="Genomic_DNA"/>
</dbReference>
<dbReference type="RefSeq" id="WP_011431560.1">
    <property type="nucleotide sequence ID" value="NC_007775.1"/>
</dbReference>
<dbReference type="SMR" id="Q2JR73"/>
<dbReference type="STRING" id="321327.CYA_2788"/>
<dbReference type="KEGG" id="cya:CYA_2788"/>
<dbReference type="eggNOG" id="COG0184">
    <property type="taxonomic scope" value="Bacteria"/>
</dbReference>
<dbReference type="HOGENOM" id="CLU_148518_0_0_3"/>
<dbReference type="OrthoDB" id="9799262at2"/>
<dbReference type="Proteomes" id="UP000008818">
    <property type="component" value="Chromosome"/>
</dbReference>
<dbReference type="GO" id="GO:0022627">
    <property type="term" value="C:cytosolic small ribosomal subunit"/>
    <property type="evidence" value="ECO:0007669"/>
    <property type="project" value="TreeGrafter"/>
</dbReference>
<dbReference type="GO" id="GO:0019843">
    <property type="term" value="F:rRNA binding"/>
    <property type="evidence" value="ECO:0007669"/>
    <property type="project" value="UniProtKB-UniRule"/>
</dbReference>
<dbReference type="GO" id="GO:0003735">
    <property type="term" value="F:structural constituent of ribosome"/>
    <property type="evidence" value="ECO:0007669"/>
    <property type="project" value="InterPro"/>
</dbReference>
<dbReference type="GO" id="GO:0006412">
    <property type="term" value="P:translation"/>
    <property type="evidence" value="ECO:0007669"/>
    <property type="project" value="UniProtKB-UniRule"/>
</dbReference>
<dbReference type="CDD" id="cd00353">
    <property type="entry name" value="Ribosomal_S15p_S13e"/>
    <property type="match status" value="1"/>
</dbReference>
<dbReference type="FunFam" id="1.10.287.10:FF:000002">
    <property type="entry name" value="30S ribosomal protein S15"/>
    <property type="match status" value="1"/>
</dbReference>
<dbReference type="Gene3D" id="6.10.250.3130">
    <property type="match status" value="1"/>
</dbReference>
<dbReference type="Gene3D" id="1.10.287.10">
    <property type="entry name" value="S15/NS1, RNA-binding"/>
    <property type="match status" value="1"/>
</dbReference>
<dbReference type="HAMAP" id="MF_01343_B">
    <property type="entry name" value="Ribosomal_uS15_B"/>
    <property type="match status" value="1"/>
</dbReference>
<dbReference type="InterPro" id="IPR000589">
    <property type="entry name" value="Ribosomal_uS15"/>
</dbReference>
<dbReference type="InterPro" id="IPR005290">
    <property type="entry name" value="Ribosomal_uS15_bac-type"/>
</dbReference>
<dbReference type="InterPro" id="IPR009068">
    <property type="entry name" value="uS15_NS1_RNA-bd_sf"/>
</dbReference>
<dbReference type="NCBIfam" id="TIGR00952">
    <property type="entry name" value="S15_bact"/>
    <property type="match status" value="1"/>
</dbReference>
<dbReference type="PANTHER" id="PTHR23321">
    <property type="entry name" value="RIBOSOMAL PROTEIN S15, BACTERIAL AND ORGANELLAR"/>
    <property type="match status" value="1"/>
</dbReference>
<dbReference type="PANTHER" id="PTHR23321:SF26">
    <property type="entry name" value="SMALL RIBOSOMAL SUBUNIT PROTEIN US15M"/>
    <property type="match status" value="1"/>
</dbReference>
<dbReference type="Pfam" id="PF00312">
    <property type="entry name" value="Ribosomal_S15"/>
    <property type="match status" value="1"/>
</dbReference>
<dbReference type="SMART" id="SM01387">
    <property type="entry name" value="Ribosomal_S15"/>
    <property type="match status" value="1"/>
</dbReference>
<dbReference type="SUPFAM" id="SSF47060">
    <property type="entry name" value="S15/NS1 RNA-binding domain"/>
    <property type="match status" value="1"/>
</dbReference>
<dbReference type="PROSITE" id="PS00362">
    <property type="entry name" value="RIBOSOMAL_S15"/>
    <property type="match status" value="1"/>
</dbReference>
<comment type="function">
    <text evidence="1">One of the primary rRNA binding proteins, it binds directly to 16S rRNA where it helps nucleate assembly of the platform of the 30S subunit by binding and bridging several RNA helices of the 16S rRNA.</text>
</comment>
<comment type="function">
    <text evidence="1">Forms an intersubunit bridge (bridge B4) with the 23S rRNA of the 50S subunit in the ribosome.</text>
</comment>
<comment type="subunit">
    <text evidence="1">Part of the 30S ribosomal subunit. Forms a bridge to the 50S subunit in the 70S ribosome, contacting the 23S rRNA.</text>
</comment>
<comment type="similarity">
    <text evidence="1">Belongs to the universal ribosomal protein uS15 family.</text>
</comment>
<gene>
    <name evidence="1" type="primary">rpsO</name>
    <name evidence="1" type="synonym">rps15</name>
    <name type="ordered locus">CYA_2788</name>
</gene>
<accession>Q2JR73</accession>
<feature type="chain" id="PRO_0000255543" description="Small ribosomal subunit protein uS15">
    <location>
        <begin position="1"/>
        <end position="91"/>
    </location>
</feature>
<organism>
    <name type="scientific">Synechococcus sp. (strain JA-3-3Ab)</name>
    <name type="common">Cyanobacteria bacterium Yellowstone A-Prime</name>
    <dbReference type="NCBI Taxonomy" id="321327"/>
    <lineage>
        <taxon>Bacteria</taxon>
        <taxon>Bacillati</taxon>
        <taxon>Cyanobacteriota</taxon>
        <taxon>Cyanophyceae</taxon>
        <taxon>Synechococcales</taxon>
        <taxon>Synechococcaceae</taxon>
        <taxon>Synechococcus</taxon>
    </lineage>
</organism>
<keyword id="KW-0687">Ribonucleoprotein</keyword>
<keyword id="KW-0689">Ribosomal protein</keyword>
<keyword id="KW-0694">RNA-binding</keyword>
<keyword id="KW-0699">rRNA-binding</keyword>
<evidence type="ECO:0000255" key="1">
    <source>
        <dbReference type="HAMAP-Rule" id="MF_01343"/>
    </source>
</evidence>
<evidence type="ECO:0000305" key="2"/>
<sequence>MALLQQEKQEIIETYRLHDTDTGSAEVQVALLTSRINQLSQHLQKNPKDFNSRRGLMMMIGRRKRLLNYIAKRSPDRFRELAERLNIRVKK</sequence>
<proteinExistence type="inferred from homology"/>
<name>RS15_SYNJA</name>
<reference key="1">
    <citation type="journal article" date="2007" name="ISME J.">
        <title>Population level functional diversity in a microbial community revealed by comparative genomic and metagenomic analyses.</title>
        <authorList>
            <person name="Bhaya D."/>
            <person name="Grossman A.R."/>
            <person name="Steunou A.-S."/>
            <person name="Khuri N."/>
            <person name="Cohan F.M."/>
            <person name="Hamamura N."/>
            <person name="Melendrez M.C."/>
            <person name="Bateson M.M."/>
            <person name="Ward D.M."/>
            <person name="Heidelberg J.F."/>
        </authorList>
    </citation>
    <scope>NUCLEOTIDE SEQUENCE [LARGE SCALE GENOMIC DNA]</scope>
    <source>
        <strain>JA-3-3Ab</strain>
    </source>
</reference>
<protein>
    <recommendedName>
        <fullName evidence="1">Small ribosomal subunit protein uS15</fullName>
    </recommendedName>
    <alternativeName>
        <fullName evidence="2">30S ribosomal protein S15</fullName>
    </alternativeName>
</protein>